<gene>
    <name type="primary">MT-CYB</name>
    <name type="synonym">COB</name>
    <name type="synonym">CYTB</name>
    <name type="synonym">MTCYB</name>
</gene>
<feature type="chain" id="PRO_0000061476" description="Cytochrome b">
    <location>
        <begin position="1"/>
        <end position="371"/>
    </location>
</feature>
<feature type="transmembrane region" description="Helical" evidence="2">
    <location>
        <begin position="25"/>
        <end position="45"/>
    </location>
</feature>
<feature type="transmembrane region" description="Helical" evidence="2">
    <location>
        <begin position="69"/>
        <end position="90"/>
    </location>
</feature>
<feature type="transmembrane region" description="Helical" evidence="2">
    <location>
        <begin position="105"/>
        <end position="125"/>
    </location>
</feature>
<feature type="transmembrane region" description="Helical" evidence="2">
    <location>
        <begin position="170"/>
        <end position="190"/>
    </location>
</feature>
<feature type="transmembrane region" description="Helical" evidence="2">
    <location>
        <begin position="218"/>
        <end position="238"/>
    </location>
</feature>
<feature type="transmembrane region" description="Helical" evidence="2">
    <location>
        <begin position="280"/>
        <end position="300"/>
    </location>
</feature>
<feature type="transmembrane region" description="Helical" evidence="2">
    <location>
        <begin position="312"/>
        <end position="332"/>
    </location>
</feature>
<feature type="transmembrane region" description="Helical" evidence="2">
    <location>
        <begin position="339"/>
        <end position="358"/>
    </location>
</feature>
<feature type="binding site" description="axial binding residue" evidence="2">
    <location>
        <position position="75"/>
    </location>
    <ligand>
        <name>heme b</name>
        <dbReference type="ChEBI" id="CHEBI:60344"/>
        <label>b562</label>
    </ligand>
    <ligandPart>
        <name>Fe</name>
        <dbReference type="ChEBI" id="CHEBI:18248"/>
    </ligandPart>
</feature>
<feature type="binding site" description="axial binding residue" evidence="2">
    <location>
        <position position="89"/>
    </location>
    <ligand>
        <name>heme b</name>
        <dbReference type="ChEBI" id="CHEBI:60344"/>
        <label>b566</label>
    </ligand>
    <ligandPart>
        <name>Fe</name>
        <dbReference type="ChEBI" id="CHEBI:18248"/>
    </ligandPart>
</feature>
<feature type="binding site" description="axial binding residue" evidence="2">
    <location>
        <position position="174"/>
    </location>
    <ligand>
        <name>heme b</name>
        <dbReference type="ChEBI" id="CHEBI:60344"/>
        <label>b562</label>
    </ligand>
    <ligandPart>
        <name>Fe</name>
        <dbReference type="ChEBI" id="CHEBI:18248"/>
    </ligandPart>
</feature>
<feature type="binding site" description="axial binding residue" evidence="2">
    <location>
        <position position="188"/>
    </location>
    <ligand>
        <name>heme b</name>
        <dbReference type="ChEBI" id="CHEBI:60344"/>
        <label>b566</label>
    </ligand>
    <ligandPart>
        <name>Fe</name>
        <dbReference type="ChEBI" id="CHEBI:18248"/>
    </ligandPart>
</feature>
<feature type="binding site" evidence="2">
    <location>
        <position position="193"/>
    </location>
    <ligand>
        <name>a ubiquinone</name>
        <dbReference type="ChEBI" id="CHEBI:16389"/>
    </ligand>
</feature>
<reference key="1">
    <citation type="thesis" date="1997" institute="Queen's University / Kingston" country="Canada">
        <title>Hic Sunt Serpentes -- molecular phylogenetics and the Boidae (Serpentes: Booidea).</title>
        <authorList>
            <person name="Campbell B.N."/>
        </authorList>
    </citation>
    <scope>NUCLEOTIDE SEQUENCE [GENOMIC DNA]</scope>
</reference>
<comment type="function">
    <text evidence="2">Component of the ubiquinol-cytochrome c reductase complex (complex III or cytochrome b-c1 complex) that is part of the mitochondrial respiratory chain. The b-c1 complex mediates electron transfer from ubiquinol to cytochrome c. Contributes to the generation of a proton gradient across the mitochondrial membrane that is then used for ATP synthesis.</text>
</comment>
<comment type="cofactor">
    <cofactor evidence="2">
        <name>heme b</name>
        <dbReference type="ChEBI" id="CHEBI:60344"/>
    </cofactor>
    <text evidence="2">Binds 2 heme b groups non-covalently.</text>
</comment>
<comment type="subunit">
    <text evidence="2">The cytochrome bc1 complex contains 3 respiratory subunits (MT-CYB, CYC1 and UQCRFS1), 2 core proteins (UQCRC1 and UQCRC2) and probably 6 low-molecular weight proteins.</text>
</comment>
<comment type="subcellular location">
    <subcellularLocation>
        <location evidence="2">Mitochondrion inner membrane</location>
        <topology evidence="2">Multi-pass membrane protein</topology>
    </subcellularLocation>
</comment>
<comment type="miscellaneous">
    <text evidence="1">Heme 1 (or BL or b562) is low-potential and absorbs at about 562 nm, and heme 2 (or BH or b566) is high-potential and absorbs at about 566 nm.</text>
</comment>
<comment type="similarity">
    <text evidence="3 4">Belongs to the cytochrome b family.</text>
</comment>
<comment type="caution">
    <text evidence="2">The full-length protein contains only eight transmembrane helices, not nine as predicted by bioinformatics tools.</text>
</comment>
<sequence>MPHHYILTLFGLLPVATNISTWWNFGSMLLACLALQVLTGFFLAVHYTANINLAFSSIIHITRDVPYGWMMQNLHAIGASMFFICIYIHIARGLYYGSYLNKETWMSGITLLITLMATAFFGYVLPWGQMSFWAATVITNLLTAVPYLGTTLTTWLWGGFAINDPTLTRFFALHFILPFAIISMSSLHIILLHEEGSSNPLGTNPDIDKIPFHPYHSYKDLLFLTLMILFMLIIVSFFPDIFNDPDNFSKANPLVTPQHIKPEWYFLFAYGILRSIPNKLGGALALVMSIMILFIIPFTHTAHFRPMTFRPLSQLMFWTLVSTFITITWAATKPVEPPYIIISQVTATLYFIFFISMPLLGWIENKMTNTP</sequence>
<dbReference type="EMBL" id="U69853">
    <property type="protein sequence ID" value="AAC01887.1"/>
    <property type="molecule type" value="Genomic_DNA"/>
</dbReference>
<dbReference type="SMR" id="O48106"/>
<dbReference type="GO" id="GO:0005743">
    <property type="term" value="C:mitochondrial inner membrane"/>
    <property type="evidence" value="ECO:0007669"/>
    <property type="project" value="UniProtKB-SubCell"/>
</dbReference>
<dbReference type="GO" id="GO:0045275">
    <property type="term" value="C:respiratory chain complex III"/>
    <property type="evidence" value="ECO:0007669"/>
    <property type="project" value="InterPro"/>
</dbReference>
<dbReference type="GO" id="GO:0046872">
    <property type="term" value="F:metal ion binding"/>
    <property type="evidence" value="ECO:0007669"/>
    <property type="project" value="UniProtKB-KW"/>
</dbReference>
<dbReference type="GO" id="GO:0008121">
    <property type="term" value="F:ubiquinol-cytochrome-c reductase activity"/>
    <property type="evidence" value="ECO:0007669"/>
    <property type="project" value="InterPro"/>
</dbReference>
<dbReference type="GO" id="GO:0006122">
    <property type="term" value="P:mitochondrial electron transport, ubiquinol to cytochrome c"/>
    <property type="evidence" value="ECO:0007669"/>
    <property type="project" value="TreeGrafter"/>
</dbReference>
<dbReference type="CDD" id="cd00290">
    <property type="entry name" value="cytochrome_b_C"/>
    <property type="match status" value="1"/>
</dbReference>
<dbReference type="CDD" id="cd00284">
    <property type="entry name" value="Cytochrome_b_N"/>
    <property type="match status" value="1"/>
</dbReference>
<dbReference type="Gene3D" id="1.20.810.10">
    <property type="entry name" value="Cytochrome Bc1 Complex, Chain C"/>
    <property type="match status" value="1"/>
</dbReference>
<dbReference type="InterPro" id="IPR005798">
    <property type="entry name" value="Cyt_b/b6_C"/>
</dbReference>
<dbReference type="InterPro" id="IPR036150">
    <property type="entry name" value="Cyt_b/b6_C_sf"/>
</dbReference>
<dbReference type="InterPro" id="IPR005797">
    <property type="entry name" value="Cyt_b/b6_N"/>
</dbReference>
<dbReference type="InterPro" id="IPR027387">
    <property type="entry name" value="Cytb/b6-like_sf"/>
</dbReference>
<dbReference type="InterPro" id="IPR030689">
    <property type="entry name" value="Cytochrome_b"/>
</dbReference>
<dbReference type="InterPro" id="IPR048260">
    <property type="entry name" value="Cytochrome_b_C_euk/bac"/>
</dbReference>
<dbReference type="InterPro" id="IPR048259">
    <property type="entry name" value="Cytochrome_b_N_euk/bac"/>
</dbReference>
<dbReference type="InterPro" id="IPR016174">
    <property type="entry name" value="Di-haem_cyt_TM"/>
</dbReference>
<dbReference type="PANTHER" id="PTHR19271">
    <property type="entry name" value="CYTOCHROME B"/>
    <property type="match status" value="1"/>
</dbReference>
<dbReference type="PANTHER" id="PTHR19271:SF16">
    <property type="entry name" value="CYTOCHROME B"/>
    <property type="match status" value="1"/>
</dbReference>
<dbReference type="Pfam" id="PF00032">
    <property type="entry name" value="Cytochrom_B_C"/>
    <property type="match status" value="1"/>
</dbReference>
<dbReference type="Pfam" id="PF00033">
    <property type="entry name" value="Cytochrome_B"/>
    <property type="match status" value="1"/>
</dbReference>
<dbReference type="PIRSF" id="PIRSF038885">
    <property type="entry name" value="COB"/>
    <property type="match status" value="1"/>
</dbReference>
<dbReference type="SUPFAM" id="SSF81648">
    <property type="entry name" value="a domain/subunit of cytochrome bc1 complex (Ubiquinol-cytochrome c reductase)"/>
    <property type="match status" value="1"/>
</dbReference>
<dbReference type="SUPFAM" id="SSF81342">
    <property type="entry name" value="Transmembrane di-heme cytochromes"/>
    <property type="match status" value="1"/>
</dbReference>
<dbReference type="PROSITE" id="PS51003">
    <property type="entry name" value="CYTB_CTER"/>
    <property type="match status" value="1"/>
</dbReference>
<dbReference type="PROSITE" id="PS51002">
    <property type="entry name" value="CYTB_NTER"/>
    <property type="match status" value="1"/>
</dbReference>
<accession>O48106</accession>
<proteinExistence type="inferred from homology"/>
<organism>
    <name type="scientific">Python molurus</name>
    <name type="common">Indian python</name>
    <dbReference type="NCBI Taxonomy" id="51750"/>
    <lineage>
        <taxon>Eukaryota</taxon>
        <taxon>Metazoa</taxon>
        <taxon>Chordata</taxon>
        <taxon>Craniata</taxon>
        <taxon>Vertebrata</taxon>
        <taxon>Euteleostomi</taxon>
        <taxon>Lepidosauria</taxon>
        <taxon>Squamata</taxon>
        <taxon>Bifurcata</taxon>
        <taxon>Unidentata</taxon>
        <taxon>Episquamata</taxon>
        <taxon>Toxicofera</taxon>
        <taxon>Serpentes</taxon>
        <taxon>Henophidia</taxon>
        <taxon>Pythonidae</taxon>
        <taxon>Python</taxon>
    </lineage>
</organism>
<name>CYB_PYTMO</name>
<evidence type="ECO:0000250" key="1"/>
<evidence type="ECO:0000250" key="2">
    <source>
        <dbReference type="UniProtKB" id="P00157"/>
    </source>
</evidence>
<evidence type="ECO:0000255" key="3">
    <source>
        <dbReference type="PROSITE-ProRule" id="PRU00967"/>
    </source>
</evidence>
<evidence type="ECO:0000255" key="4">
    <source>
        <dbReference type="PROSITE-ProRule" id="PRU00968"/>
    </source>
</evidence>
<protein>
    <recommendedName>
        <fullName>Cytochrome b</fullName>
    </recommendedName>
    <alternativeName>
        <fullName>Complex III subunit 3</fullName>
    </alternativeName>
    <alternativeName>
        <fullName>Complex III subunit III</fullName>
    </alternativeName>
    <alternativeName>
        <fullName>Cytochrome b-c1 complex subunit 3</fullName>
    </alternativeName>
    <alternativeName>
        <fullName>Ubiquinol-cytochrome-c reductase complex cytochrome b subunit</fullName>
    </alternativeName>
</protein>
<geneLocation type="mitochondrion"/>
<keyword id="KW-0249">Electron transport</keyword>
<keyword id="KW-0349">Heme</keyword>
<keyword id="KW-0408">Iron</keyword>
<keyword id="KW-0472">Membrane</keyword>
<keyword id="KW-0479">Metal-binding</keyword>
<keyword id="KW-0496">Mitochondrion</keyword>
<keyword id="KW-0999">Mitochondrion inner membrane</keyword>
<keyword id="KW-0679">Respiratory chain</keyword>
<keyword id="KW-0812">Transmembrane</keyword>
<keyword id="KW-1133">Transmembrane helix</keyword>
<keyword id="KW-0813">Transport</keyword>
<keyword id="KW-0830">Ubiquinone</keyword>